<dbReference type="EMBL" id="AY261366">
    <property type="status" value="NOT_ANNOTATED_CDS"/>
    <property type="molecule type" value="Genomic_DNA"/>
</dbReference>
<dbReference type="SMR" id="P0C9D0"/>
<dbReference type="Proteomes" id="UP000000858">
    <property type="component" value="Segment"/>
</dbReference>
<dbReference type="GO" id="GO:0044423">
    <property type="term" value="C:virion component"/>
    <property type="evidence" value="ECO:0007669"/>
    <property type="project" value="UniProtKB-KW"/>
</dbReference>
<dbReference type="Gene3D" id="3.90.1150.10">
    <property type="entry name" value="Aspartate Aminotransferase, domain 1"/>
    <property type="match status" value="1"/>
</dbReference>
<dbReference type="Gene3D" id="3.40.640.10">
    <property type="entry name" value="Type I PLP-dependent aspartate aminotransferase-like (Major domain)"/>
    <property type="match status" value="1"/>
</dbReference>
<dbReference type="InterPro" id="IPR000192">
    <property type="entry name" value="Aminotrans_V_dom"/>
</dbReference>
<dbReference type="InterPro" id="IPR015424">
    <property type="entry name" value="PyrdxlP-dep_Trfase"/>
</dbReference>
<dbReference type="InterPro" id="IPR015421">
    <property type="entry name" value="PyrdxlP-dep_Trfase_major"/>
</dbReference>
<dbReference type="InterPro" id="IPR015422">
    <property type="entry name" value="PyrdxlP-dep_Trfase_small"/>
</dbReference>
<dbReference type="PANTHER" id="PTHR11601:SF34">
    <property type="entry name" value="CYSTEINE DESULFURASE"/>
    <property type="match status" value="1"/>
</dbReference>
<dbReference type="PANTHER" id="PTHR11601">
    <property type="entry name" value="CYSTEINE DESULFURYLASE FAMILY MEMBER"/>
    <property type="match status" value="1"/>
</dbReference>
<dbReference type="Pfam" id="PF00266">
    <property type="entry name" value="Aminotran_5"/>
    <property type="match status" value="1"/>
</dbReference>
<dbReference type="SUPFAM" id="SSF53383">
    <property type="entry name" value="PLP-dependent transferases"/>
    <property type="match status" value="1"/>
</dbReference>
<proteinExistence type="inferred from homology"/>
<name>NIFSL_ASFWA</name>
<keyword id="KW-0946">Virion</keyword>
<gene>
    <name type="ordered locus">War-134</name>
</gene>
<comment type="cofactor">
    <cofactor evidence="1">
        <name>pyridoxal 5'-phosphate</name>
        <dbReference type="ChEBI" id="CHEBI:597326"/>
    </cofactor>
</comment>
<comment type="subcellular location">
    <subcellularLocation>
        <location evidence="2">Virion</location>
    </subcellularLocation>
</comment>
<comment type="induction">
    <text evidence="3">Expressed in the late phase of the viral replicative cycle.</text>
</comment>
<comment type="similarity">
    <text evidence="3">Belongs to the class-V pyridoxal-phosphate-dependent aminotransferase family. NifS/IscS subfamily.</text>
</comment>
<comment type="caution">
    <text evidence="3">Although related to the NifS/IscS subfamily, lacks the conserved active site, suggesting it has no transferase activity.</text>
</comment>
<organismHost>
    <name type="scientific">Ornithodoros</name>
    <name type="common">relapsing fever ticks</name>
    <dbReference type="NCBI Taxonomy" id="6937"/>
</organismHost>
<organismHost>
    <name type="scientific">Phacochoerus aethiopicus</name>
    <name type="common">Warthog</name>
    <dbReference type="NCBI Taxonomy" id="85517"/>
</organismHost>
<organismHost>
    <name type="scientific">Phacochoerus africanus</name>
    <name type="common">Warthog</name>
    <dbReference type="NCBI Taxonomy" id="41426"/>
</organismHost>
<organismHost>
    <name type="scientific">Potamochoerus larvatus</name>
    <name type="common">Bushpig</name>
    <dbReference type="NCBI Taxonomy" id="273792"/>
</organismHost>
<organismHost>
    <name type="scientific">Sus scrofa</name>
    <name type="common">Pig</name>
    <dbReference type="NCBI Taxonomy" id="9823"/>
</organismHost>
<feature type="chain" id="PRO_0000373146" description="NifS-like protein">
    <location>
        <begin position="1"/>
        <end position="386"/>
    </location>
</feature>
<feature type="binding site" evidence="1">
    <location>
        <begin position="58"/>
        <end position="59"/>
    </location>
    <ligand>
        <name>pyridoxal 5'-phosphate</name>
        <dbReference type="ChEBI" id="CHEBI:597326"/>
    </ligand>
</feature>
<feature type="binding site" evidence="1">
    <location>
        <begin position="184"/>
        <end position="186"/>
    </location>
    <ligand>
        <name>pyridoxal 5'-phosphate</name>
        <dbReference type="ChEBI" id="CHEBI:597326"/>
    </ligand>
</feature>
<accession>P0C9D0</accession>
<reference key="1">
    <citation type="submission" date="2003-03" db="EMBL/GenBank/DDBJ databases">
        <title>African swine fever virus genomes.</title>
        <authorList>
            <person name="Kutish G.F."/>
            <person name="Rock D.L."/>
        </authorList>
    </citation>
    <scope>NUCLEOTIDE SEQUENCE [LARGE SCALE GENOMIC DNA]</scope>
</reference>
<organism>
    <name type="scientific">African swine fever virus (isolate Warthog/Namibia/Wart80/1980)</name>
    <name type="common">ASFV</name>
    <dbReference type="NCBI Taxonomy" id="561444"/>
    <lineage>
        <taxon>Viruses</taxon>
        <taxon>Varidnaviria</taxon>
        <taxon>Bamfordvirae</taxon>
        <taxon>Nucleocytoviricota</taxon>
        <taxon>Pokkesviricetes</taxon>
        <taxon>Asfuvirales</taxon>
        <taxon>Asfarviridae</taxon>
        <taxon>Asfivirus</taxon>
        <taxon>African swine fever virus</taxon>
    </lineage>
</organism>
<sequence>MASILTLDGLYAEVPKFLPEALREGCAGKNPLSFYIQQILNLMGCDGNEYHVLFTSSSEEANTHMIMAAVRRHLLRTRQRPHVIIGAAEPPSVTECVKALAQEKRCVYTIIPLKNFEIDPVAVYDAIQSNTCLACISGTNAVVKTFNKLQDISKVLRGIPLHSEVSDLVYQGCIKQNPPADSFSINSLYGFLGVGVLGMKKKVMQGLGPLIFGGGLRGGSPNIPGIHAMYRTLTQQRPSMKKINTIHKLFMKTLKKHQHIYLPIGGVSAEDMSAENSAKDIPSTDVPVGPKGLPGYILFSVGHRAEELQKKIFTKFNIKVGRIVDLQEILFRIKIPQKYWETLLFIQLRDNLTKEDIKRVMVVLMHLDTITPRGSLPPPSYSSSFS</sequence>
<protein>
    <recommendedName>
        <fullName>NifS-like protein</fullName>
    </recommendedName>
</protein>
<evidence type="ECO:0000250" key="1">
    <source>
        <dbReference type="UniProtKB" id="P0A6B9"/>
    </source>
</evidence>
<evidence type="ECO:0000250" key="2">
    <source>
        <dbReference type="UniProtKB" id="Q65192"/>
    </source>
</evidence>
<evidence type="ECO:0000305" key="3"/>